<organism>
    <name type="scientific">Alkaliphilus metalliredigens (strain QYMF)</name>
    <dbReference type="NCBI Taxonomy" id="293826"/>
    <lineage>
        <taxon>Bacteria</taxon>
        <taxon>Bacillati</taxon>
        <taxon>Bacillota</taxon>
        <taxon>Clostridia</taxon>
        <taxon>Peptostreptococcales</taxon>
        <taxon>Natronincolaceae</taxon>
        <taxon>Alkaliphilus</taxon>
    </lineage>
</organism>
<reference key="1">
    <citation type="journal article" date="2016" name="Genome Announc.">
        <title>Complete genome sequence of Alkaliphilus metalliredigens strain QYMF, an alkaliphilic and metal-reducing bacterium isolated from borax-contaminated leachate ponds.</title>
        <authorList>
            <person name="Hwang C."/>
            <person name="Copeland A."/>
            <person name="Lucas S."/>
            <person name="Lapidus A."/>
            <person name="Barry K."/>
            <person name="Detter J.C."/>
            <person name="Glavina Del Rio T."/>
            <person name="Hammon N."/>
            <person name="Israni S."/>
            <person name="Dalin E."/>
            <person name="Tice H."/>
            <person name="Pitluck S."/>
            <person name="Chertkov O."/>
            <person name="Brettin T."/>
            <person name="Bruce D."/>
            <person name="Han C."/>
            <person name="Schmutz J."/>
            <person name="Larimer F."/>
            <person name="Land M.L."/>
            <person name="Hauser L."/>
            <person name="Kyrpides N."/>
            <person name="Mikhailova N."/>
            <person name="Ye Q."/>
            <person name="Zhou J."/>
            <person name="Richardson P."/>
            <person name="Fields M.W."/>
        </authorList>
    </citation>
    <scope>NUCLEOTIDE SEQUENCE [LARGE SCALE GENOMIC DNA]</scope>
    <source>
        <strain>QYMF</strain>
    </source>
</reference>
<dbReference type="EMBL" id="CP000724">
    <property type="protein sequence ID" value="ABR50862.1"/>
    <property type="molecule type" value="Genomic_DNA"/>
</dbReference>
<dbReference type="RefSeq" id="WP_012065747.1">
    <property type="nucleotide sequence ID" value="NC_009633.1"/>
</dbReference>
<dbReference type="SMR" id="A6TXE4"/>
<dbReference type="STRING" id="293826.Amet_4796"/>
<dbReference type="KEGG" id="amt:Amet_4796"/>
<dbReference type="eggNOG" id="COG0445">
    <property type="taxonomic scope" value="Bacteria"/>
</dbReference>
<dbReference type="HOGENOM" id="CLU_007831_2_2_9"/>
<dbReference type="OrthoDB" id="9815560at2"/>
<dbReference type="Proteomes" id="UP000001572">
    <property type="component" value="Chromosome"/>
</dbReference>
<dbReference type="GO" id="GO:0005829">
    <property type="term" value="C:cytosol"/>
    <property type="evidence" value="ECO:0007669"/>
    <property type="project" value="TreeGrafter"/>
</dbReference>
<dbReference type="GO" id="GO:0050660">
    <property type="term" value="F:flavin adenine dinucleotide binding"/>
    <property type="evidence" value="ECO:0007669"/>
    <property type="project" value="UniProtKB-UniRule"/>
</dbReference>
<dbReference type="GO" id="GO:0030488">
    <property type="term" value="P:tRNA methylation"/>
    <property type="evidence" value="ECO:0007669"/>
    <property type="project" value="TreeGrafter"/>
</dbReference>
<dbReference type="GO" id="GO:0002098">
    <property type="term" value="P:tRNA wobble uridine modification"/>
    <property type="evidence" value="ECO:0007669"/>
    <property type="project" value="InterPro"/>
</dbReference>
<dbReference type="FunFam" id="1.10.10.1800:FF:000001">
    <property type="entry name" value="tRNA uridine 5-carboxymethylaminomethyl modification enzyme MnmG"/>
    <property type="match status" value="1"/>
</dbReference>
<dbReference type="FunFam" id="1.10.150.570:FF:000001">
    <property type="entry name" value="tRNA uridine 5-carboxymethylaminomethyl modification enzyme MnmG"/>
    <property type="match status" value="1"/>
</dbReference>
<dbReference type="FunFam" id="3.50.50.60:FF:000002">
    <property type="entry name" value="tRNA uridine 5-carboxymethylaminomethyl modification enzyme MnmG"/>
    <property type="match status" value="1"/>
</dbReference>
<dbReference type="FunFam" id="3.50.50.60:FF:000063">
    <property type="entry name" value="tRNA uridine 5-carboxymethylaminomethyl modification enzyme MnmG"/>
    <property type="match status" value="1"/>
</dbReference>
<dbReference type="Gene3D" id="3.50.50.60">
    <property type="entry name" value="FAD/NAD(P)-binding domain"/>
    <property type="match status" value="2"/>
</dbReference>
<dbReference type="Gene3D" id="1.10.150.570">
    <property type="entry name" value="GidA associated domain, C-terminal subdomain"/>
    <property type="match status" value="1"/>
</dbReference>
<dbReference type="Gene3D" id="1.10.10.1800">
    <property type="entry name" value="tRNA uridine 5-carboxymethylaminomethyl modification enzyme MnmG/GidA"/>
    <property type="match status" value="1"/>
</dbReference>
<dbReference type="HAMAP" id="MF_00129">
    <property type="entry name" value="MnmG_GidA"/>
    <property type="match status" value="1"/>
</dbReference>
<dbReference type="InterPro" id="IPR036188">
    <property type="entry name" value="FAD/NAD-bd_sf"/>
</dbReference>
<dbReference type="InterPro" id="IPR049312">
    <property type="entry name" value="GIDA_C_N"/>
</dbReference>
<dbReference type="InterPro" id="IPR004416">
    <property type="entry name" value="MnmG"/>
</dbReference>
<dbReference type="InterPro" id="IPR002218">
    <property type="entry name" value="MnmG-rel"/>
</dbReference>
<dbReference type="InterPro" id="IPR020595">
    <property type="entry name" value="MnmG-rel_CS"/>
</dbReference>
<dbReference type="InterPro" id="IPR026904">
    <property type="entry name" value="MnmG_C"/>
</dbReference>
<dbReference type="InterPro" id="IPR047001">
    <property type="entry name" value="MnmG_C_subdom"/>
</dbReference>
<dbReference type="InterPro" id="IPR044920">
    <property type="entry name" value="MnmG_C_subdom_sf"/>
</dbReference>
<dbReference type="InterPro" id="IPR040131">
    <property type="entry name" value="MnmG_N"/>
</dbReference>
<dbReference type="NCBIfam" id="TIGR00136">
    <property type="entry name" value="mnmG_gidA"/>
    <property type="match status" value="1"/>
</dbReference>
<dbReference type="PANTHER" id="PTHR11806">
    <property type="entry name" value="GLUCOSE INHIBITED DIVISION PROTEIN A"/>
    <property type="match status" value="1"/>
</dbReference>
<dbReference type="PANTHER" id="PTHR11806:SF0">
    <property type="entry name" value="PROTEIN MTO1 HOMOLOG, MITOCHONDRIAL"/>
    <property type="match status" value="1"/>
</dbReference>
<dbReference type="Pfam" id="PF01134">
    <property type="entry name" value="GIDA"/>
    <property type="match status" value="1"/>
</dbReference>
<dbReference type="Pfam" id="PF21680">
    <property type="entry name" value="GIDA_C_1st"/>
    <property type="match status" value="1"/>
</dbReference>
<dbReference type="Pfam" id="PF13932">
    <property type="entry name" value="SAM_GIDA_C"/>
    <property type="match status" value="1"/>
</dbReference>
<dbReference type="PRINTS" id="PR00411">
    <property type="entry name" value="PNDRDTASEI"/>
</dbReference>
<dbReference type="SMART" id="SM01228">
    <property type="entry name" value="GIDA_assoc_3"/>
    <property type="match status" value="1"/>
</dbReference>
<dbReference type="SUPFAM" id="SSF51905">
    <property type="entry name" value="FAD/NAD(P)-binding domain"/>
    <property type="match status" value="1"/>
</dbReference>
<dbReference type="PROSITE" id="PS01280">
    <property type="entry name" value="GIDA_1"/>
    <property type="match status" value="1"/>
</dbReference>
<feature type="chain" id="PRO_1000057839" description="tRNA uridine 5-carboxymethylaminomethyl modification enzyme MnmG">
    <location>
        <begin position="1"/>
        <end position="630"/>
    </location>
</feature>
<feature type="binding site" evidence="1">
    <location>
        <begin position="14"/>
        <end position="19"/>
    </location>
    <ligand>
        <name>FAD</name>
        <dbReference type="ChEBI" id="CHEBI:57692"/>
    </ligand>
</feature>
<feature type="binding site" evidence="1">
    <location>
        <position position="126"/>
    </location>
    <ligand>
        <name>FAD</name>
        <dbReference type="ChEBI" id="CHEBI:57692"/>
    </ligand>
</feature>
<feature type="binding site" evidence="1">
    <location>
        <position position="181"/>
    </location>
    <ligand>
        <name>FAD</name>
        <dbReference type="ChEBI" id="CHEBI:57692"/>
    </ligand>
</feature>
<feature type="binding site" evidence="1">
    <location>
        <begin position="273"/>
        <end position="287"/>
    </location>
    <ligand>
        <name>NAD(+)</name>
        <dbReference type="ChEBI" id="CHEBI:57540"/>
    </ligand>
</feature>
<feature type="binding site" evidence="1">
    <location>
        <position position="370"/>
    </location>
    <ligand>
        <name>FAD</name>
        <dbReference type="ChEBI" id="CHEBI:57692"/>
    </ligand>
</feature>
<protein>
    <recommendedName>
        <fullName evidence="1">tRNA uridine 5-carboxymethylaminomethyl modification enzyme MnmG</fullName>
    </recommendedName>
    <alternativeName>
        <fullName evidence="1">Glucose-inhibited division protein A</fullName>
    </alternativeName>
</protein>
<sequence length="630" mass="70524">MKYNAGTFDVIVVGAGHAGCEAALAAARMGAKTLMLTMTLDSIAMMPCNPSIGGTGKGHLVREIDAIGGEMGINTDKTFIQSRMLNTGKGPAVHSLRAQADKNKYHTEMKKTIENEPNLLLKQAEVVDLIIEDNTVKGVVTRSGASFYSHSVILATGVYLRGKIYIGEVNYESGPNGLFPSMHLSEKLTKLGCNMRRFKTGTPARIHQDSVDFSKMEEHLGDEEIVPFSFMNDGIEKKQVPCWLTRTTGETHRVIMENLNRSAMYRGDMESVGPRYCPSIEDKVVRFSDKPSHQIFIEPEGLDTKEMYVQGMSTSLPEEVQDAMLKTVIGLESAVIMRPAYAIEYDCIDPTQLKPTLEVKHIENLFSGGQFNGTSGYEEAAAQGLMAGINAVLKTKGEEPFVLDRSEAYIGVLIDDLVTKGTNEPYRMMTSRAEYRLILRQDNADMRLTEKSYKIGLASKERLERYLLKKSHIEEEITRLKKTNVSPEKANPILEENKSSLIKAGMSLYDLLKRPEVTYKVLKKIDENRNVDIVRDAQEQCEIIIKYEGYIEKQLRQIDQFKKLENKILPQEIDYHGIDGLRLEARQKLSDIQPMSVGQASRISGVSPSDISVLMIYLEQRRRQKNGGGT</sequence>
<accession>A6TXE4</accession>
<keyword id="KW-0963">Cytoplasm</keyword>
<keyword id="KW-0274">FAD</keyword>
<keyword id="KW-0285">Flavoprotein</keyword>
<keyword id="KW-0520">NAD</keyword>
<keyword id="KW-1185">Reference proteome</keyword>
<keyword id="KW-0819">tRNA processing</keyword>
<proteinExistence type="inferred from homology"/>
<name>MNMG_ALKMQ</name>
<comment type="function">
    <text evidence="1">NAD-binding protein involved in the addition of a carboxymethylaminomethyl (cmnm) group at the wobble position (U34) of certain tRNAs, forming tRNA-cmnm(5)s(2)U34.</text>
</comment>
<comment type="cofactor">
    <cofactor evidence="1">
        <name>FAD</name>
        <dbReference type="ChEBI" id="CHEBI:57692"/>
    </cofactor>
</comment>
<comment type="subunit">
    <text evidence="1">Homodimer. Heterotetramer of two MnmE and two MnmG subunits.</text>
</comment>
<comment type="subcellular location">
    <subcellularLocation>
        <location evidence="1">Cytoplasm</location>
    </subcellularLocation>
</comment>
<comment type="similarity">
    <text evidence="1">Belongs to the MnmG family.</text>
</comment>
<gene>
    <name evidence="1" type="primary">mnmG</name>
    <name evidence="1" type="synonym">gidA</name>
    <name type="ordered locus">Amet_4796</name>
</gene>
<evidence type="ECO:0000255" key="1">
    <source>
        <dbReference type="HAMAP-Rule" id="MF_00129"/>
    </source>
</evidence>